<comment type="function">
    <text>Reversibly catalyzes the transfer of phosphate between ATP and various phosphogens (e.g. creatine phosphate). Creatine kinase isoenzymes play a central role in energy transduction in tissues with large, fluctuating energy demands, such as skeletal muscle, heart, brain and spermatozoa.</text>
</comment>
<comment type="catalytic activity">
    <reaction evidence="3">
        <text>creatine + ATP = N-phosphocreatine + ADP + H(+)</text>
        <dbReference type="Rhea" id="RHEA:17157"/>
        <dbReference type="ChEBI" id="CHEBI:15378"/>
        <dbReference type="ChEBI" id="CHEBI:30616"/>
        <dbReference type="ChEBI" id="CHEBI:57947"/>
        <dbReference type="ChEBI" id="CHEBI:58092"/>
        <dbReference type="ChEBI" id="CHEBI:456216"/>
        <dbReference type="EC" id="2.7.3.2"/>
    </reaction>
</comment>
<comment type="tissue specificity">
    <text evidence="5">Exists in many tissues, but preferentially in testis.</text>
</comment>
<comment type="similarity">
    <text evidence="1 2">Belongs to the ATP:guanido phosphotransferase family.</text>
</comment>
<evidence type="ECO:0000255" key="1">
    <source>
        <dbReference type="PROSITE-ProRule" id="PRU00842"/>
    </source>
</evidence>
<evidence type="ECO:0000255" key="2">
    <source>
        <dbReference type="PROSITE-ProRule" id="PRU00843"/>
    </source>
</evidence>
<evidence type="ECO:0000255" key="3">
    <source>
        <dbReference type="PROSITE-ProRule" id="PRU10029"/>
    </source>
</evidence>
<evidence type="ECO:0000256" key="4">
    <source>
        <dbReference type="SAM" id="MobiDB-lite"/>
    </source>
</evidence>
<evidence type="ECO:0000269" key="5">
    <source>
    </source>
</evidence>
<organism>
    <name type="scientific">Oncorhynchus mykiss</name>
    <name type="common">Rainbow trout</name>
    <name type="synonym">Salmo gairdneri</name>
    <dbReference type="NCBI Taxonomy" id="8022"/>
    <lineage>
        <taxon>Eukaryota</taxon>
        <taxon>Metazoa</taxon>
        <taxon>Chordata</taxon>
        <taxon>Craniata</taxon>
        <taxon>Vertebrata</taxon>
        <taxon>Euteleostomi</taxon>
        <taxon>Actinopterygii</taxon>
        <taxon>Neopterygii</taxon>
        <taxon>Teleostei</taxon>
        <taxon>Protacanthopterygii</taxon>
        <taxon>Salmoniformes</taxon>
        <taxon>Salmonidae</taxon>
        <taxon>Salmoninae</taxon>
        <taxon>Oncorhynchus</taxon>
    </lineage>
</organism>
<sequence>MEKINDKMAKLTIKRLSPEEEFPDLSQHNNHMAKVLTQDMYTKLRDRATPNGFTIDGVIQTGIDNPGHPFIMTVGCVAGDEETYEVFKELLDPIIEDRHGGYKPTDKHKTDLNPDNLKGGDDLDPNYVISSRVRTGRSIRGFCLPPHCSRGERRGVEKMSVEALDSLSGDLKGKYYALKNMTDAEQQQLIDDHFLFDKPVSPLLLASGMARDWPDGRGIWHNDTKTFLVWVNEEDHLRVISMQKGGNMKEVFNRFCTGLTKIETLFKDKGTSFMWNEHLGYVLTCPSNLGTGLRAGVHVKIPNISKHAKFEEVLKRLRLQKRGTGGVDTAAVGGTFDISNADRLGFSEVELVQMVVDGVKLLVEMEKKLEKGQSIDDLMPAQK</sequence>
<accession>P24722</accession>
<gene>
    <name type="primary">tck1</name>
</gene>
<protein>
    <recommendedName>
        <fullName>Creatine kinase, testis isozyme</fullName>
        <ecNumber>2.7.3.2</ecNumber>
    </recommendedName>
</protein>
<feature type="chain" id="PRO_0000211984" description="Creatine kinase, testis isozyme">
    <location>
        <begin position="1"/>
        <end position="383"/>
    </location>
</feature>
<feature type="domain" description="Phosphagen kinase N-terminal" evidence="1">
    <location>
        <begin position="14"/>
        <end position="100"/>
    </location>
</feature>
<feature type="domain" description="Phosphagen kinase C-terminal" evidence="2">
    <location>
        <begin position="127"/>
        <end position="369"/>
    </location>
</feature>
<feature type="region of interest" description="Disordered" evidence="4">
    <location>
        <begin position="99"/>
        <end position="119"/>
    </location>
</feature>
<feature type="compositionally biased region" description="Basic and acidic residues" evidence="4">
    <location>
        <begin position="99"/>
        <end position="112"/>
    </location>
</feature>
<feature type="binding site" evidence="2">
    <location>
        <begin position="130"/>
        <end position="134"/>
    </location>
    <ligand>
        <name>ATP</name>
        <dbReference type="ChEBI" id="CHEBI:30616"/>
    </ligand>
</feature>
<feature type="binding site" evidence="2">
    <location>
        <position position="193"/>
    </location>
    <ligand>
        <name>ATP</name>
        <dbReference type="ChEBI" id="CHEBI:30616"/>
    </ligand>
</feature>
<feature type="binding site" evidence="2">
    <location>
        <position position="238"/>
    </location>
    <ligand>
        <name>ATP</name>
        <dbReference type="ChEBI" id="CHEBI:30616"/>
    </ligand>
</feature>
<feature type="binding site" evidence="2">
    <location>
        <position position="294"/>
    </location>
    <ligand>
        <name>ATP</name>
        <dbReference type="ChEBI" id="CHEBI:30616"/>
    </ligand>
</feature>
<feature type="binding site" evidence="2">
    <location>
        <begin position="322"/>
        <end position="327"/>
    </location>
    <ligand>
        <name>ATP</name>
        <dbReference type="ChEBI" id="CHEBI:30616"/>
    </ligand>
</feature>
<feature type="binding site" evidence="2">
    <location>
        <position position="337"/>
    </location>
    <ligand>
        <name>ATP</name>
        <dbReference type="ChEBI" id="CHEBI:30616"/>
    </ligand>
</feature>
<keyword id="KW-0067">ATP-binding</keyword>
<keyword id="KW-0418">Kinase</keyword>
<keyword id="KW-0547">Nucleotide-binding</keyword>
<keyword id="KW-0808">Transferase</keyword>
<name>KCRT_ONCMY</name>
<dbReference type="EC" id="2.7.3.2"/>
<dbReference type="EMBL" id="X53859">
    <property type="protein sequence ID" value="CAA37852.1"/>
    <property type="molecule type" value="mRNA"/>
</dbReference>
<dbReference type="PIR" id="S13164">
    <property type="entry name" value="S13164"/>
</dbReference>
<dbReference type="RefSeq" id="NP_001118187.1">
    <property type="nucleotide sequence ID" value="NM_001124715.1"/>
</dbReference>
<dbReference type="SMR" id="P24722"/>
<dbReference type="GeneID" id="100136767"/>
<dbReference type="KEGG" id="omy:100136767"/>
<dbReference type="OrthoDB" id="430219at2759"/>
<dbReference type="Proteomes" id="UP000694395">
    <property type="component" value="Unplaced"/>
</dbReference>
<dbReference type="GO" id="GO:0005615">
    <property type="term" value="C:extracellular space"/>
    <property type="evidence" value="ECO:0007669"/>
    <property type="project" value="TreeGrafter"/>
</dbReference>
<dbReference type="GO" id="GO:0005524">
    <property type="term" value="F:ATP binding"/>
    <property type="evidence" value="ECO:0007669"/>
    <property type="project" value="UniProtKB-KW"/>
</dbReference>
<dbReference type="GO" id="GO:0004111">
    <property type="term" value="F:creatine kinase activity"/>
    <property type="evidence" value="ECO:0007669"/>
    <property type="project" value="UniProtKB-EC"/>
</dbReference>
<dbReference type="GO" id="GO:0046314">
    <property type="term" value="P:phosphocreatine biosynthetic process"/>
    <property type="evidence" value="ECO:0007669"/>
    <property type="project" value="InterPro"/>
</dbReference>
<dbReference type="CDD" id="cd00716">
    <property type="entry name" value="creatine_kinase_like"/>
    <property type="match status" value="1"/>
</dbReference>
<dbReference type="FunFam" id="3.30.590.10:FF:000026">
    <property type="entry name" value="Creatine kinase B-type"/>
    <property type="match status" value="1"/>
</dbReference>
<dbReference type="FunFam" id="1.10.135.10:FF:000001">
    <property type="entry name" value="Creatine kinase M-type"/>
    <property type="match status" value="1"/>
</dbReference>
<dbReference type="Gene3D" id="1.10.135.10">
    <property type="entry name" value="ATP:guanido phosphotransferase, N-terminal domain"/>
    <property type="match status" value="1"/>
</dbReference>
<dbReference type="Gene3D" id="3.30.590.10">
    <property type="entry name" value="Glutamine synthetase/guanido kinase, catalytic domain"/>
    <property type="match status" value="1"/>
</dbReference>
<dbReference type="InterPro" id="IPR000749">
    <property type="entry name" value="ATP-guanido_PTrfase"/>
</dbReference>
<dbReference type="InterPro" id="IPR022415">
    <property type="entry name" value="ATP-guanido_PTrfase_AS"/>
</dbReference>
<dbReference type="InterPro" id="IPR022414">
    <property type="entry name" value="ATP-guanido_PTrfase_cat"/>
</dbReference>
<dbReference type="InterPro" id="IPR022413">
    <property type="entry name" value="ATP-guanido_PTrfase_N"/>
</dbReference>
<dbReference type="InterPro" id="IPR036802">
    <property type="entry name" value="ATP-guanido_PTrfase_N_sf"/>
</dbReference>
<dbReference type="InterPro" id="IPR014746">
    <property type="entry name" value="Gln_synth/guanido_kin_cat_dom"/>
</dbReference>
<dbReference type="PANTHER" id="PTHR11547">
    <property type="entry name" value="ARGININE OR CREATINE KINASE"/>
    <property type="match status" value="1"/>
</dbReference>
<dbReference type="PANTHER" id="PTHR11547:SF23">
    <property type="entry name" value="CREATINE KINASE B-TYPE"/>
    <property type="match status" value="1"/>
</dbReference>
<dbReference type="Pfam" id="PF00217">
    <property type="entry name" value="ATP-gua_Ptrans"/>
    <property type="match status" value="1"/>
</dbReference>
<dbReference type="Pfam" id="PF02807">
    <property type="entry name" value="ATP-gua_PtransN"/>
    <property type="match status" value="1"/>
</dbReference>
<dbReference type="SUPFAM" id="SSF55931">
    <property type="entry name" value="Glutamine synthetase/guanido kinase"/>
    <property type="match status" value="1"/>
</dbReference>
<dbReference type="SUPFAM" id="SSF48034">
    <property type="entry name" value="Guanido kinase N-terminal domain"/>
    <property type="match status" value="1"/>
</dbReference>
<dbReference type="PROSITE" id="PS00112">
    <property type="entry name" value="PHOSPHAGEN_KINASE"/>
    <property type="match status" value="1"/>
</dbReference>
<dbReference type="PROSITE" id="PS51510">
    <property type="entry name" value="PHOSPHAGEN_KINASE_C"/>
    <property type="match status" value="1"/>
</dbReference>
<dbReference type="PROSITE" id="PS51509">
    <property type="entry name" value="PHOSPHAGEN_KINASE_N"/>
    <property type="match status" value="1"/>
</dbReference>
<reference key="1">
    <citation type="journal article" date="1990" name="Biochim. Biophys. Acta">
        <title>A novel creatine kinase cDNA whose transcript shows enhanced testicular expression.</title>
        <authorList>
            <person name="Garber A.T."/>
            <person name="Winkfein R.J."/>
            <person name="Dixon G.H."/>
        </authorList>
    </citation>
    <scope>NUCLEOTIDE SEQUENCE [MRNA]</scope>
    <scope>TISSUE SPECIFICITY</scope>
    <source>
        <tissue>Testis</tissue>
    </source>
</reference>
<proteinExistence type="evidence at transcript level"/>